<reference key="1">
    <citation type="journal article" date="2011" name="J. Bacteriol.">
        <title>Comparative genomics of 28 Salmonella enterica isolates: evidence for CRISPR-mediated adaptive sublineage evolution.</title>
        <authorList>
            <person name="Fricke W.F."/>
            <person name="Mammel M.K."/>
            <person name="McDermott P.F."/>
            <person name="Tartera C."/>
            <person name="White D.G."/>
            <person name="Leclerc J.E."/>
            <person name="Ravel J."/>
            <person name="Cebula T.A."/>
        </authorList>
    </citation>
    <scope>NUCLEOTIDE SEQUENCE [LARGE SCALE GENOMIC DNA]</scope>
    <source>
        <strain>CVM19633</strain>
    </source>
</reference>
<comment type="function">
    <text evidence="1">Involved in the biosynthesis of lipid A, a phosphorylated glycolipid that anchors the lipopolysaccharide to the outer membrane of the cell.</text>
</comment>
<comment type="catalytic activity">
    <reaction evidence="1">
        <text>a (3R)-hydroxyacyl-[ACP] + UDP-N-acetyl-alpha-D-glucosamine = a UDP-3-O-[(3R)-3-hydroxyacyl]-N-acetyl-alpha-D-glucosamine + holo-[ACP]</text>
        <dbReference type="Rhea" id="RHEA:67812"/>
        <dbReference type="Rhea" id="RHEA-COMP:9685"/>
        <dbReference type="Rhea" id="RHEA-COMP:9945"/>
        <dbReference type="ChEBI" id="CHEBI:57705"/>
        <dbReference type="ChEBI" id="CHEBI:64479"/>
        <dbReference type="ChEBI" id="CHEBI:78827"/>
        <dbReference type="ChEBI" id="CHEBI:173225"/>
        <dbReference type="EC" id="2.3.1.129"/>
    </reaction>
</comment>
<comment type="pathway">
    <text evidence="1">Glycolipid biosynthesis; lipid IV(A) biosynthesis; lipid IV(A) from (3R)-3-hydroxytetradecanoyl-[acyl-carrier-protein] and UDP-N-acetyl-alpha-D-glucosamine: step 1/6.</text>
</comment>
<comment type="subunit">
    <text evidence="1">Homotrimer.</text>
</comment>
<comment type="subcellular location">
    <subcellularLocation>
        <location evidence="1">Cytoplasm</location>
    </subcellularLocation>
</comment>
<comment type="similarity">
    <text evidence="1">Belongs to the transferase hexapeptide repeat family. LpxA subfamily.</text>
</comment>
<feature type="chain" id="PRO_1000122732" description="Acyl-[acyl-carrier-protein]--UDP-N-acetylglucosamine O-acyltransferase">
    <location>
        <begin position="1"/>
        <end position="262"/>
    </location>
</feature>
<organism>
    <name type="scientific">Salmonella schwarzengrund (strain CVM19633)</name>
    <dbReference type="NCBI Taxonomy" id="439843"/>
    <lineage>
        <taxon>Bacteria</taxon>
        <taxon>Pseudomonadati</taxon>
        <taxon>Pseudomonadota</taxon>
        <taxon>Gammaproteobacteria</taxon>
        <taxon>Enterobacterales</taxon>
        <taxon>Enterobacteriaceae</taxon>
        <taxon>Salmonella</taxon>
    </lineage>
</organism>
<dbReference type="EC" id="2.3.1.129" evidence="1"/>
<dbReference type="EMBL" id="CP001127">
    <property type="protein sequence ID" value="ACF90914.1"/>
    <property type="molecule type" value="Genomic_DNA"/>
</dbReference>
<dbReference type="RefSeq" id="WP_000565952.1">
    <property type="nucleotide sequence ID" value="NC_011094.1"/>
</dbReference>
<dbReference type="SMR" id="B4TYE1"/>
<dbReference type="KEGG" id="sew:SeSA_A0254"/>
<dbReference type="HOGENOM" id="CLU_061249_0_0_6"/>
<dbReference type="UniPathway" id="UPA00359">
    <property type="reaction ID" value="UER00477"/>
</dbReference>
<dbReference type="Proteomes" id="UP000001865">
    <property type="component" value="Chromosome"/>
</dbReference>
<dbReference type="GO" id="GO:0005737">
    <property type="term" value="C:cytoplasm"/>
    <property type="evidence" value="ECO:0007669"/>
    <property type="project" value="UniProtKB-SubCell"/>
</dbReference>
<dbReference type="GO" id="GO:0016020">
    <property type="term" value="C:membrane"/>
    <property type="evidence" value="ECO:0007669"/>
    <property type="project" value="GOC"/>
</dbReference>
<dbReference type="GO" id="GO:0008780">
    <property type="term" value="F:acyl-[acyl-carrier-protein]-UDP-N-acetylglucosamine O-acyltransferase activity"/>
    <property type="evidence" value="ECO:0007669"/>
    <property type="project" value="UniProtKB-UniRule"/>
</dbReference>
<dbReference type="GO" id="GO:0009245">
    <property type="term" value="P:lipid A biosynthetic process"/>
    <property type="evidence" value="ECO:0007669"/>
    <property type="project" value="UniProtKB-UniRule"/>
</dbReference>
<dbReference type="CDD" id="cd03351">
    <property type="entry name" value="LbH_UDP-GlcNAc_AT"/>
    <property type="match status" value="1"/>
</dbReference>
<dbReference type="FunFam" id="2.160.10.10:FF:000003">
    <property type="entry name" value="Acyl-[acyl-carrier-protein]--UDP-N-acetylglucosamine O-acyltransferase"/>
    <property type="match status" value="1"/>
</dbReference>
<dbReference type="Gene3D" id="2.160.10.10">
    <property type="entry name" value="Hexapeptide repeat proteins"/>
    <property type="match status" value="1"/>
</dbReference>
<dbReference type="Gene3D" id="1.20.1180.10">
    <property type="entry name" value="Udp N-acetylglucosamine O-acyltransferase, C-terminal domain"/>
    <property type="match status" value="1"/>
</dbReference>
<dbReference type="HAMAP" id="MF_00387">
    <property type="entry name" value="LpxA"/>
    <property type="match status" value="1"/>
</dbReference>
<dbReference type="InterPro" id="IPR029098">
    <property type="entry name" value="Acetyltransf_C"/>
</dbReference>
<dbReference type="InterPro" id="IPR037157">
    <property type="entry name" value="Acetyltransf_C_sf"/>
</dbReference>
<dbReference type="InterPro" id="IPR001451">
    <property type="entry name" value="Hexapep"/>
</dbReference>
<dbReference type="InterPro" id="IPR018357">
    <property type="entry name" value="Hexapep_transf_CS"/>
</dbReference>
<dbReference type="InterPro" id="IPR010137">
    <property type="entry name" value="Lipid_A_LpxA"/>
</dbReference>
<dbReference type="InterPro" id="IPR011004">
    <property type="entry name" value="Trimer_LpxA-like_sf"/>
</dbReference>
<dbReference type="NCBIfam" id="TIGR01852">
    <property type="entry name" value="lipid_A_lpxA"/>
    <property type="match status" value="1"/>
</dbReference>
<dbReference type="NCBIfam" id="NF003657">
    <property type="entry name" value="PRK05289.1"/>
    <property type="match status" value="1"/>
</dbReference>
<dbReference type="PANTHER" id="PTHR43480">
    <property type="entry name" value="ACYL-[ACYL-CARRIER-PROTEIN]--UDP-N-ACETYLGLUCOSAMINE O-ACYLTRANSFERASE"/>
    <property type="match status" value="1"/>
</dbReference>
<dbReference type="PANTHER" id="PTHR43480:SF1">
    <property type="entry name" value="ACYL-[ACYL-CARRIER-PROTEIN]--UDP-N-ACETYLGLUCOSAMINE O-ACYLTRANSFERASE, MITOCHONDRIAL-RELATED"/>
    <property type="match status" value="1"/>
</dbReference>
<dbReference type="Pfam" id="PF13720">
    <property type="entry name" value="Acetyltransf_11"/>
    <property type="match status" value="1"/>
</dbReference>
<dbReference type="Pfam" id="PF00132">
    <property type="entry name" value="Hexapep"/>
    <property type="match status" value="2"/>
</dbReference>
<dbReference type="PIRSF" id="PIRSF000456">
    <property type="entry name" value="UDP-GlcNAc_acltr"/>
    <property type="match status" value="1"/>
</dbReference>
<dbReference type="SUPFAM" id="SSF51161">
    <property type="entry name" value="Trimeric LpxA-like enzymes"/>
    <property type="match status" value="1"/>
</dbReference>
<dbReference type="PROSITE" id="PS00101">
    <property type="entry name" value="HEXAPEP_TRANSFERASES"/>
    <property type="match status" value="2"/>
</dbReference>
<keyword id="KW-0012">Acyltransferase</keyword>
<keyword id="KW-0963">Cytoplasm</keyword>
<keyword id="KW-0441">Lipid A biosynthesis</keyword>
<keyword id="KW-0444">Lipid biosynthesis</keyword>
<keyword id="KW-0443">Lipid metabolism</keyword>
<keyword id="KW-0677">Repeat</keyword>
<keyword id="KW-0808">Transferase</keyword>
<gene>
    <name evidence="1" type="primary">lpxA</name>
    <name type="ordered locus">SeSA_A0254</name>
</gene>
<accession>B4TYE1</accession>
<evidence type="ECO:0000255" key="1">
    <source>
        <dbReference type="HAMAP-Rule" id="MF_00387"/>
    </source>
</evidence>
<name>LPXA_SALSV</name>
<proteinExistence type="inferred from homology"/>
<protein>
    <recommendedName>
        <fullName evidence="1">Acyl-[acyl-carrier-protein]--UDP-N-acetylglucosamine O-acyltransferase</fullName>
        <shortName evidence="1">UDP-N-acetylglucosamine acyltransferase</shortName>
        <ecNumber evidence="1">2.3.1.129</ecNumber>
    </recommendedName>
</protein>
<sequence length="262" mass="28117">MIDKSAFIHPTAIVEDGAVIGANVHIGPFCIVGPQVEIGEGTVLKSHVVVNGQTKIGRDNEIYQFASIGEVNQDLKYAGEPTRVEIGDRNRIRESVTIHRGTVQGGGLTKVGSDNLLMINAHVAHDCTVGNRCILANNATLAGHVSVDDFAIIGGMTAVHQFCIIGAHVMVGGCSGVAQDVPPYVIAQGNHATPFGVNIEGLKRRGFSREGLVAIRNAYKLLYRSGKTLDEAKLEIAELAEKHPEVKAFTEFFERSTRGPIR</sequence>